<organism>
    <name type="scientific">Kluyveromyces lactis (strain ATCC 8585 / CBS 2359 / DSM 70799 / NBRC 1267 / NRRL Y-1140 / WM37)</name>
    <name type="common">Yeast</name>
    <name type="synonym">Candida sphaerica</name>
    <dbReference type="NCBI Taxonomy" id="284590"/>
    <lineage>
        <taxon>Eukaryota</taxon>
        <taxon>Fungi</taxon>
        <taxon>Dikarya</taxon>
        <taxon>Ascomycota</taxon>
        <taxon>Saccharomycotina</taxon>
        <taxon>Saccharomycetes</taxon>
        <taxon>Saccharomycetales</taxon>
        <taxon>Saccharomycetaceae</taxon>
        <taxon>Kluyveromyces</taxon>
    </lineage>
</organism>
<protein>
    <recommendedName>
        <fullName>Cytochrome c lysine N-methyltransferase 1</fullName>
        <ecNumber>2.1.1.59</ecNumber>
    </recommendedName>
</protein>
<accession>Q6CMC0</accession>
<comment type="function">
    <text evidence="1">Methyltransferase which mediates trimethylation of cytochrome c (CYC1).</text>
</comment>
<comment type="catalytic activity">
    <reaction evidence="3">
        <text>L-lysyl-[cytochrome c] + S-adenosyl-L-methionine = N(6)-methyl-L-lysyl-[cytochrome c] + S-adenosyl-L-homocysteine + H(+)</text>
        <dbReference type="Rhea" id="RHEA:24312"/>
        <dbReference type="Rhea" id="RHEA-COMP:9754"/>
        <dbReference type="Rhea" id="RHEA-COMP:9755"/>
        <dbReference type="ChEBI" id="CHEBI:15378"/>
        <dbReference type="ChEBI" id="CHEBI:29969"/>
        <dbReference type="ChEBI" id="CHEBI:57856"/>
        <dbReference type="ChEBI" id="CHEBI:59789"/>
        <dbReference type="ChEBI" id="CHEBI:61929"/>
        <dbReference type="EC" id="2.1.1.59"/>
    </reaction>
</comment>
<comment type="subcellular location">
    <subcellularLocation>
        <location evidence="1">Cytoplasm</location>
        <location evidence="1">Cytosol</location>
    </subcellularLocation>
</comment>
<comment type="domain">
    <text evidence="1">The SET-like region, although related with the SET domain is not detected by any prediction method.</text>
</comment>
<comment type="similarity">
    <text evidence="2 3">Belongs to the class V-like SAM-binding methyltransferase superfamily.</text>
</comment>
<dbReference type="EC" id="2.1.1.59"/>
<dbReference type="EMBL" id="CR382125">
    <property type="protein sequence ID" value="CAH00006.1"/>
    <property type="molecule type" value="Genomic_DNA"/>
</dbReference>
<dbReference type="RefSeq" id="XP_454919.1">
    <property type="nucleotide sequence ID" value="XM_454919.1"/>
</dbReference>
<dbReference type="SMR" id="Q6CMC0"/>
<dbReference type="FunCoup" id="Q6CMC0">
    <property type="interactions" value="71"/>
</dbReference>
<dbReference type="STRING" id="284590.Q6CMC0"/>
<dbReference type="PaxDb" id="284590-Q6CMC0"/>
<dbReference type="KEGG" id="kla:KLLA0_E21407g"/>
<dbReference type="eggNOG" id="ENOG502RXKP">
    <property type="taxonomic scope" value="Eukaryota"/>
</dbReference>
<dbReference type="HOGENOM" id="CLU_026942_0_0_1"/>
<dbReference type="InParanoid" id="Q6CMC0"/>
<dbReference type="OMA" id="NEHALMI"/>
<dbReference type="Proteomes" id="UP000000598">
    <property type="component" value="Chromosome E"/>
</dbReference>
<dbReference type="GO" id="GO:0005829">
    <property type="term" value="C:cytosol"/>
    <property type="evidence" value="ECO:0007669"/>
    <property type="project" value="UniProtKB-SubCell"/>
</dbReference>
<dbReference type="GO" id="GO:0000277">
    <property type="term" value="F:[cytochrome c]-lysine N-methyltransferase activity"/>
    <property type="evidence" value="ECO:0007669"/>
    <property type="project" value="UniProtKB-EC"/>
</dbReference>
<dbReference type="GO" id="GO:0032259">
    <property type="term" value="P:methylation"/>
    <property type="evidence" value="ECO:0007669"/>
    <property type="project" value="UniProtKB-KW"/>
</dbReference>
<dbReference type="CDD" id="cd10527">
    <property type="entry name" value="SET_LSMT"/>
    <property type="match status" value="1"/>
</dbReference>
<dbReference type="Gene3D" id="3.90.1410.10">
    <property type="entry name" value="set domain protein methyltransferase, domain 1"/>
    <property type="match status" value="1"/>
</dbReference>
<dbReference type="InterPro" id="IPR025815">
    <property type="entry name" value="Ctm1"/>
</dbReference>
<dbReference type="InterPro" id="IPR001214">
    <property type="entry name" value="SET_dom"/>
</dbReference>
<dbReference type="InterPro" id="IPR046341">
    <property type="entry name" value="SET_dom_sf"/>
</dbReference>
<dbReference type="SUPFAM" id="SSF82199">
    <property type="entry name" value="SET domain"/>
    <property type="match status" value="1"/>
</dbReference>
<dbReference type="PROSITE" id="PS51611">
    <property type="entry name" value="SAM_MT59"/>
    <property type="match status" value="1"/>
</dbReference>
<dbReference type="PROSITE" id="PS50280">
    <property type="entry name" value="SET"/>
    <property type="match status" value="1"/>
</dbReference>
<keyword id="KW-0963">Cytoplasm</keyword>
<keyword id="KW-0489">Methyltransferase</keyword>
<keyword id="KW-1185">Reference proteome</keyword>
<keyword id="KW-0949">S-adenosyl-L-methionine</keyword>
<keyword id="KW-0808">Transferase</keyword>
<proteinExistence type="inferred from homology"/>
<name>CTM1_KLULA</name>
<reference key="1">
    <citation type="journal article" date="2004" name="Nature">
        <title>Genome evolution in yeasts.</title>
        <authorList>
            <person name="Dujon B."/>
            <person name="Sherman D."/>
            <person name="Fischer G."/>
            <person name="Durrens P."/>
            <person name="Casaregola S."/>
            <person name="Lafontaine I."/>
            <person name="de Montigny J."/>
            <person name="Marck C."/>
            <person name="Neuveglise C."/>
            <person name="Talla E."/>
            <person name="Goffard N."/>
            <person name="Frangeul L."/>
            <person name="Aigle M."/>
            <person name="Anthouard V."/>
            <person name="Babour A."/>
            <person name="Barbe V."/>
            <person name="Barnay S."/>
            <person name="Blanchin S."/>
            <person name="Beckerich J.-M."/>
            <person name="Beyne E."/>
            <person name="Bleykasten C."/>
            <person name="Boisrame A."/>
            <person name="Boyer J."/>
            <person name="Cattolico L."/>
            <person name="Confanioleri F."/>
            <person name="de Daruvar A."/>
            <person name="Despons L."/>
            <person name="Fabre E."/>
            <person name="Fairhead C."/>
            <person name="Ferry-Dumazet H."/>
            <person name="Groppi A."/>
            <person name="Hantraye F."/>
            <person name="Hennequin C."/>
            <person name="Jauniaux N."/>
            <person name="Joyet P."/>
            <person name="Kachouri R."/>
            <person name="Kerrest A."/>
            <person name="Koszul R."/>
            <person name="Lemaire M."/>
            <person name="Lesur I."/>
            <person name="Ma L."/>
            <person name="Muller H."/>
            <person name="Nicaud J.-M."/>
            <person name="Nikolski M."/>
            <person name="Oztas S."/>
            <person name="Ozier-Kalogeropoulos O."/>
            <person name="Pellenz S."/>
            <person name="Potier S."/>
            <person name="Richard G.-F."/>
            <person name="Straub M.-L."/>
            <person name="Suleau A."/>
            <person name="Swennen D."/>
            <person name="Tekaia F."/>
            <person name="Wesolowski-Louvel M."/>
            <person name="Westhof E."/>
            <person name="Wirth B."/>
            <person name="Zeniou-Meyer M."/>
            <person name="Zivanovic Y."/>
            <person name="Bolotin-Fukuhara M."/>
            <person name="Thierry A."/>
            <person name="Bouchier C."/>
            <person name="Caudron B."/>
            <person name="Scarpelli C."/>
            <person name="Gaillardin C."/>
            <person name="Weissenbach J."/>
            <person name="Wincker P."/>
            <person name="Souciet J.-L."/>
        </authorList>
    </citation>
    <scope>NUCLEOTIDE SEQUENCE [LARGE SCALE GENOMIC DNA]</scope>
    <source>
        <strain>ATCC 8585 / CBS 2359 / DSM 70799 / NBRC 1267 / NRRL Y-1140 / WM37</strain>
    </source>
</reference>
<gene>
    <name type="primary">CTM1</name>
    <name type="ordered locus">KLLA0E21494g</name>
</gene>
<feature type="chain" id="PRO_0000228983" description="Cytochrome c lysine N-methyltransferase 1">
    <location>
        <begin position="1"/>
        <end position="503"/>
    </location>
</feature>
<feature type="domain" description="SET" evidence="2">
    <location>
        <begin position="52"/>
        <end position="276"/>
    </location>
</feature>
<feature type="region of interest" description="SET-like">
    <location>
        <begin position="190"/>
        <end position="291"/>
    </location>
</feature>
<sequence>MEAATEWLLENTPITKSECTTIRESVVDGDTGGYGVFVNFTKLRTLKGEKDSKFELLRIPRSATISMTSIRDILAKSTSENAVTASIKGHLTAFLSDENHHAFINETNLIVIYLVLKAILSDNKTYKLTGFASFYLNEVLLKTFVPLPCNTFQEDADKWNQYYKEYLNFPQQLFIEIINRFISARFLGMNYEKLISTVYCSVISRILEIPESSGEDTDDFFVSPTLVPLLDFVNHDNDHRNAHFDIDLRTNDIVLYLELDDIDSTVEEAQVFISYAPVEELVHFEQIYGFLPKSNNVQVWCYRFDEDFLSTYHYNGINVSHFYKCMRVRPSFQILILPSEVLINDCIVEFGELLILFSQHLQDPKKISFQLSETNDSYCSILKDKCGTETTKLLDKEECLEEFFGEHDEIENYEKTLKEFKSFLSKYITFRREKISSINLLSQNSSFTAFWQKEINLLDSLKGQFESKKEVMWYEKYGNDEKIKIPTVPFPPPSWIDYENMRV</sequence>
<evidence type="ECO:0000250" key="1"/>
<evidence type="ECO:0000255" key="2">
    <source>
        <dbReference type="PROSITE-ProRule" id="PRU00190"/>
    </source>
</evidence>
<evidence type="ECO:0000255" key="3">
    <source>
        <dbReference type="PROSITE-ProRule" id="PRU00943"/>
    </source>
</evidence>